<proteinExistence type="evidence at transcript level"/>
<accession>O62653</accession>
<evidence type="ECO:0000250" key="1"/>
<evidence type="ECO:0000250" key="2">
    <source>
        <dbReference type="UniProtKB" id="P14410"/>
    </source>
</evidence>
<evidence type="ECO:0000255" key="3"/>
<evidence type="ECO:0000255" key="4">
    <source>
        <dbReference type="PROSITE-ProRule" id="PRU00779"/>
    </source>
</evidence>
<evidence type="ECO:0000255" key="5">
    <source>
        <dbReference type="PROSITE-ProRule" id="PRU10066"/>
    </source>
</evidence>
<evidence type="ECO:0000305" key="6"/>
<dbReference type="EC" id="3.2.1.48"/>
<dbReference type="EC" id="3.2.1.10"/>
<dbReference type="EMBL" id="AB011401">
    <property type="protein sequence ID" value="BAA25370.1"/>
    <property type="molecule type" value="mRNA"/>
</dbReference>
<dbReference type="SMR" id="O62653"/>
<dbReference type="CAZy" id="GH31">
    <property type="family name" value="Glycoside Hydrolase Family 31"/>
</dbReference>
<dbReference type="GlyCosmos" id="O62653">
    <property type="glycosylation" value="16 sites, No reported glycans"/>
</dbReference>
<dbReference type="BRENDA" id="3.2.1.10">
    <property type="organism ID" value="6169"/>
</dbReference>
<dbReference type="SABIO-RK" id="O62653"/>
<dbReference type="GO" id="GO:0016324">
    <property type="term" value="C:apical plasma membrane"/>
    <property type="evidence" value="ECO:0007669"/>
    <property type="project" value="UniProtKB-SubCell"/>
</dbReference>
<dbReference type="GO" id="GO:0004558">
    <property type="term" value="F:alpha-1,4-glucosidase activity"/>
    <property type="evidence" value="ECO:0007669"/>
    <property type="project" value="TreeGrafter"/>
</dbReference>
<dbReference type="GO" id="GO:0030246">
    <property type="term" value="F:carbohydrate binding"/>
    <property type="evidence" value="ECO:0007669"/>
    <property type="project" value="InterPro"/>
</dbReference>
<dbReference type="GO" id="GO:0004574">
    <property type="term" value="F:oligo-1,6-glucosidase activity"/>
    <property type="evidence" value="ECO:0007669"/>
    <property type="project" value="UniProtKB-EC"/>
</dbReference>
<dbReference type="GO" id="GO:0004575">
    <property type="term" value="F:sucrose alpha-glucosidase activity"/>
    <property type="evidence" value="ECO:0007669"/>
    <property type="project" value="UniProtKB-EC"/>
</dbReference>
<dbReference type="GO" id="GO:0005975">
    <property type="term" value="P:carbohydrate metabolic process"/>
    <property type="evidence" value="ECO:0007669"/>
    <property type="project" value="InterPro"/>
</dbReference>
<dbReference type="CDD" id="cd06602">
    <property type="entry name" value="GH31_MGAM_SI_GAA"/>
    <property type="match status" value="2"/>
</dbReference>
<dbReference type="CDD" id="cd14752">
    <property type="entry name" value="GH31_N"/>
    <property type="match status" value="2"/>
</dbReference>
<dbReference type="CDD" id="cd00111">
    <property type="entry name" value="Trefoil"/>
    <property type="match status" value="2"/>
</dbReference>
<dbReference type="FunFam" id="2.60.40.1180:FF:000001">
    <property type="entry name" value="Maltase-glucoamylase, intestinal"/>
    <property type="match status" value="2"/>
</dbReference>
<dbReference type="FunFam" id="2.60.40.1180:FF:000005">
    <property type="entry name" value="Maltase-glucoamylase, intestinal"/>
    <property type="match status" value="2"/>
</dbReference>
<dbReference type="FunFam" id="2.60.40.1760:FF:000001">
    <property type="entry name" value="Maltase-glucoamylase, intestinal"/>
    <property type="match status" value="2"/>
</dbReference>
<dbReference type="FunFam" id="3.20.20.80:FF:000016">
    <property type="entry name" value="Maltase-glucoamylase, intestinal"/>
    <property type="match status" value="2"/>
</dbReference>
<dbReference type="Gene3D" id="3.20.20.80">
    <property type="entry name" value="Glycosidases"/>
    <property type="match status" value="2"/>
</dbReference>
<dbReference type="Gene3D" id="2.60.40.1760">
    <property type="entry name" value="glycosyl hydrolase (family 31)"/>
    <property type="match status" value="2"/>
</dbReference>
<dbReference type="Gene3D" id="2.60.40.1180">
    <property type="entry name" value="Golgi alpha-mannosidase II"/>
    <property type="match status" value="4"/>
</dbReference>
<dbReference type="Gene3D" id="4.10.110.10">
    <property type="entry name" value="Spasmolytic Protein, domain 1"/>
    <property type="match status" value="2"/>
</dbReference>
<dbReference type="InterPro" id="IPR011013">
    <property type="entry name" value="Gal_mutarotase_sf_dom"/>
</dbReference>
<dbReference type="InterPro" id="IPR030458">
    <property type="entry name" value="Glyco_hydro_31_AS"/>
</dbReference>
<dbReference type="InterPro" id="IPR048395">
    <property type="entry name" value="Glyco_hydro_31_C"/>
</dbReference>
<dbReference type="InterPro" id="IPR030459">
    <property type="entry name" value="Glyco_hydro_31_CS"/>
</dbReference>
<dbReference type="InterPro" id="IPR025887">
    <property type="entry name" value="Glyco_hydro_31_N_dom"/>
</dbReference>
<dbReference type="InterPro" id="IPR000322">
    <property type="entry name" value="Glyco_hydro_31_TIM"/>
</dbReference>
<dbReference type="InterPro" id="IPR013780">
    <property type="entry name" value="Glyco_hydro_b"/>
</dbReference>
<dbReference type="InterPro" id="IPR017853">
    <property type="entry name" value="Glycoside_hydrolase_SF"/>
</dbReference>
<dbReference type="InterPro" id="IPR017957">
    <property type="entry name" value="P_trefoil_CS"/>
</dbReference>
<dbReference type="InterPro" id="IPR000519">
    <property type="entry name" value="P_trefoil_dom"/>
</dbReference>
<dbReference type="InterPro" id="IPR044913">
    <property type="entry name" value="P_trefoil_dom_sf"/>
</dbReference>
<dbReference type="PANTHER" id="PTHR22762">
    <property type="entry name" value="ALPHA-GLUCOSIDASE"/>
    <property type="match status" value="1"/>
</dbReference>
<dbReference type="PANTHER" id="PTHR22762:SF133">
    <property type="entry name" value="P-TYPE DOMAIN-CONTAINING PROTEIN"/>
    <property type="match status" value="1"/>
</dbReference>
<dbReference type="Pfam" id="PF13802">
    <property type="entry name" value="Gal_mutarotas_2"/>
    <property type="match status" value="1"/>
</dbReference>
<dbReference type="Pfam" id="PF01055">
    <property type="entry name" value="Glyco_hydro_31_2nd"/>
    <property type="match status" value="2"/>
</dbReference>
<dbReference type="Pfam" id="PF21365">
    <property type="entry name" value="Glyco_hydro_31_3rd"/>
    <property type="match status" value="2"/>
</dbReference>
<dbReference type="Pfam" id="PF00088">
    <property type="entry name" value="Trefoil"/>
    <property type="match status" value="2"/>
</dbReference>
<dbReference type="SMART" id="SM00018">
    <property type="entry name" value="PD"/>
    <property type="match status" value="2"/>
</dbReference>
<dbReference type="SUPFAM" id="SSF51445">
    <property type="entry name" value="(Trans)glycosidases"/>
    <property type="match status" value="2"/>
</dbReference>
<dbReference type="SUPFAM" id="SSF74650">
    <property type="entry name" value="Galactose mutarotase-like"/>
    <property type="match status" value="2"/>
</dbReference>
<dbReference type="SUPFAM" id="SSF51011">
    <property type="entry name" value="Glycosyl hydrolase domain"/>
    <property type="match status" value="2"/>
</dbReference>
<dbReference type="PROSITE" id="PS00129">
    <property type="entry name" value="GLYCOSYL_HYDROL_F31_1"/>
    <property type="match status" value="2"/>
</dbReference>
<dbReference type="PROSITE" id="PS00707">
    <property type="entry name" value="GLYCOSYL_HYDROL_F31_2"/>
    <property type="match status" value="2"/>
</dbReference>
<dbReference type="PROSITE" id="PS00025">
    <property type="entry name" value="P_TREFOIL_1"/>
    <property type="match status" value="1"/>
</dbReference>
<dbReference type="PROSITE" id="PS51448">
    <property type="entry name" value="P_TREFOIL_2"/>
    <property type="match status" value="2"/>
</dbReference>
<organism>
    <name type="scientific">Suncus murinus</name>
    <name type="common">Asian house shrew</name>
    <name type="synonym">Musk shrew</name>
    <dbReference type="NCBI Taxonomy" id="9378"/>
    <lineage>
        <taxon>Eukaryota</taxon>
        <taxon>Metazoa</taxon>
        <taxon>Chordata</taxon>
        <taxon>Craniata</taxon>
        <taxon>Vertebrata</taxon>
        <taxon>Euteleostomi</taxon>
        <taxon>Mammalia</taxon>
        <taxon>Eutheria</taxon>
        <taxon>Laurasiatheria</taxon>
        <taxon>Eulipotyphla</taxon>
        <taxon>Soricidae</taxon>
        <taxon>Crocidurinae</taxon>
        <taxon>Suncus</taxon>
    </lineage>
</organism>
<reference key="1">
    <citation type="journal article" date="1998" name="J. Biol. Chem.">
        <title>Molecular cloning of sucrase-isomaltase cDNA in the house musk shrew Suncus murinus and identification of a mutation responsible for isolated sucrase deficiency.</title>
        <authorList>
            <person name="Ito T."/>
            <person name="Hayashi Y."/>
            <person name="Ohmori S."/>
            <person name="Oda S."/>
            <person name="Seo H."/>
        </authorList>
    </citation>
    <scope>NUCLEOTIDE SEQUENCE [MRNA]</scope>
</reference>
<comment type="function">
    <text evidence="1">Plays an important role in the final stage of carbohydrate digestion. Isomaltase activity is specific for both alpha-1,4- and alpha-1,6-oligosaccharides (By similarity).</text>
</comment>
<comment type="catalytic activity">
    <reaction>
        <text>Hydrolysis of sucrose and maltose by an alpha-D-glucosidase-type action.</text>
        <dbReference type="EC" id="3.2.1.48"/>
    </reaction>
</comment>
<comment type="catalytic activity">
    <reaction>
        <text>Hydrolysis of (1-&gt;6)-alpha-D-glucosidic linkages in some oligosaccharides produced from starch and glycogen by alpha-amylase, and in isomaltose.</text>
        <dbReference type="EC" id="3.2.1.10"/>
    </reaction>
</comment>
<comment type="subunit">
    <text evidence="1">The resulting sucrase and isomaltase subunits stay associated with one another in a complex by non-covalent linkages.</text>
</comment>
<comment type="subcellular location">
    <subcellularLocation>
        <location>Apical cell membrane</location>
        <topology>Single-pass type II membrane protein</topology>
    </subcellularLocation>
    <text>Brush border.</text>
</comment>
<comment type="PTM">
    <text evidence="1">The precursor is proteolytically cleaved when exposed to pancreatic proteases in the intestinal lumen.</text>
</comment>
<comment type="PTM">
    <text evidence="1">Sulfated.</text>
</comment>
<comment type="miscellaneous">
    <text>There is a high degree of homology between the isomaltase and sucrase portions (41% of amino acid identity) indicating that this protein is evolved by partial gene duplication.</text>
</comment>
<comment type="similarity">
    <text evidence="6">Belongs to the glycosyl hydrolase 31 family.</text>
</comment>
<name>SUIS_SUNMU</name>
<feature type="chain" id="PRO_0000018562" description="Sucrase-isomaltase, intestinal">
    <location>
        <begin position="1"/>
        <end position="1813"/>
    </location>
</feature>
<feature type="chain" id="PRO_0000018563" description="Isomaltase" evidence="1">
    <location>
        <begin position="1"/>
        <end position="991"/>
    </location>
</feature>
<feature type="chain" id="PRO_0000018564" description="Sucrase" evidence="1">
    <location>
        <begin position="992"/>
        <end position="1813"/>
    </location>
</feature>
<feature type="topological domain" description="Cytoplasmic" evidence="3">
    <location>
        <begin position="1"/>
        <end position="12"/>
    </location>
</feature>
<feature type="transmembrane region" description="Helical; Signal-anchor for type II membrane protein" evidence="3">
    <location>
        <begin position="13"/>
        <end position="32"/>
    </location>
</feature>
<feature type="topological domain" description="Lumenal" evidence="3">
    <location>
        <begin position="33"/>
        <end position="1813"/>
    </location>
</feature>
<feature type="domain" description="P-type 1" evidence="4">
    <location>
        <begin position="46"/>
        <end position="95"/>
    </location>
</feature>
<feature type="domain" description="P-type 2" evidence="4">
    <location>
        <begin position="917"/>
        <end position="962"/>
    </location>
</feature>
<feature type="region of interest" description="Isomaltase">
    <location>
        <begin position="95"/>
        <end position="991"/>
    </location>
</feature>
<feature type="region of interest" description="Sucrase">
    <location>
        <begin position="992"/>
        <end position="1813"/>
    </location>
</feature>
<feature type="active site" description="Nucleophile; for isomaltase activity" evidence="5">
    <location>
        <position position="491"/>
    </location>
</feature>
<feature type="active site" description="For isomaltase activity" evidence="1">
    <location>
        <position position="590"/>
    </location>
</feature>
<feature type="active site" description="Nucleophile; for sucrase activity" evidence="5">
    <location>
        <position position="1380"/>
    </location>
</feature>
<feature type="active site" description="For sucrase activity" evidence="1">
    <location>
        <position position="1383"/>
    </location>
</feature>
<feature type="active site" description="Proton donor; for sucrase activity" evidence="1">
    <location>
        <position position="1486"/>
    </location>
</feature>
<feature type="binding site" evidence="1">
    <location>
        <position position="250"/>
    </location>
    <ligand>
        <name>substrate</name>
    </ligand>
</feature>
<feature type="binding site" evidence="1">
    <location>
        <position position="374"/>
    </location>
    <ligand>
        <name>substrate</name>
    </ligand>
</feature>
<feature type="binding site" evidence="1">
    <location>
        <position position="574"/>
    </location>
    <ligand>
        <name>substrate</name>
    </ligand>
</feature>
<feature type="binding site" evidence="1">
    <location>
        <position position="648"/>
    </location>
    <ligand>
        <name>substrate</name>
    </ligand>
</feature>
<feature type="modified residue" description="Phosphoserine; by PKA" evidence="2">
    <location>
        <position position="7"/>
    </location>
</feature>
<feature type="modified residue" description="Sulfotyrosine" evidence="3">
    <location>
        <position position="377"/>
    </location>
</feature>
<feature type="modified residue" description="Sulfotyrosine" evidence="3">
    <location>
        <position position="1294"/>
    </location>
</feature>
<feature type="modified residue" description="Sulfotyrosine" evidence="3">
    <location>
        <position position="1368"/>
    </location>
</feature>
<feature type="modified residue" description="Sulfotyrosine" evidence="3">
    <location>
        <position position="1371"/>
    </location>
</feature>
<feature type="glycosylation site" description="N-linked (GlcNAc...) asparagine" evidence="3">
    <location>
        <position position="127"/>
    </location>
</feature>
<feature type="glycosylation site" description="N-linked (GlcNAc...) asparagine" evidence="3">
    <location>
        <position position="388"/>
    </location>
</feature>
<feature type="glycosylation site" description="N-linked (GlcNAc...) asparagine" evidence="3">
    <location>
        <position position="669"/>
    </location>
</feature>
<feature type="glycosylation site" description="N-linked (GlcNAc...) asparagine" evidence="3">
    <location>
        <position position="791"/>
    </location>
</feature>
<feature type="glycosylation site" description="N-linked (GlcNAc...) asparagine" evidence="3">
    <location>
        <position position="896"/>
    </location>
</feature>
<feature type="glycosylation site" description="N-linked (GlcNAc...) asparagine" evidence="3">
    <location>
        <position position="911"/>
    </location>
</feature>
<feature type="glycosylation site" description="N-linked (GlcNAc...) asparagine" evidence="3">
    <location>
        <position position="1221"/>
    </location>
</feature>
<feature type="glycosylation site" description="N-linked (GlcNAc...) asparagine" evidence="3">
    <location>
        <position position="1289"/>
    </location>
</feature>
<feature type="glycosylation site" description="N-linked (GlcNAc...) asparagine" evidence="3">
    <location>
        <position position="1326"/>
    </location>
</feature>
<feature type="glycosylation site" description="N-linked (GlcNAc...) asparagine" evidence="3">
    <location>
        <position position="1340"/>
    </location>
</feature>
<feature type="glycosylation site" description="N-linked (GlcNAc...) asparagine" evidence="3">
    <location>
        <position position="1432"/>
    </location>
</feature>
<feature type="glycosylation site" description="N-linked (GlcNAc...) asparagine" evidence="3">
    <location>
        <position position="1521"/>
    </location>
</feature>
<feature type="glycosylation site" description="N-linked (GlcNAc...) asparagine" evidence="3">
    <location>
        <position position="1545"/>
    </location>
</feature>
<feature type="glycosylation site" description="N-linked (GlcNAc...) asparagine" evidence="3">
    <location>
        <position position="1558"/>
    </location>
</feature>
<feature type="glycosylation site" description="N-linked (GlcNAc...) asparagine" evidence="3">
    <location>
        <position position="1703"/>
    </location>
</feature>
<feature type="glycosylation site" description="N-linked (GlcNAc...) asparagine" evidence="3">
    <location>
        <position position="1772"/>
    </location>
</feature>
<feature type="disulfide bond" evidence="4">
    <location>
        <begin position="48"/>
        <end position="79"/>
    </location>
</feature>
<feature type="disulfide bond" evidence="4">
    <location>
        <begin position="62"/>
        <end position="78"/>
    </location>
</feature>
<feature type="disulfide bond" evidence="4">
    <location>
        <begin position="73"/>
        <end position="91"/>
    </location>
</feature>
<feature type="disulfide bond" evidence="4">
    <location>
        <begin position="506"/>
        <end position="531"/>
    </location>
</feature>
<feature type="disulfide bond" evidence="4">
    <location>
        <begin position="621"/>
        <end position="632"/>
    </location>
</feature>
<sequence length="1813" mass="208305">MARKKSSGLKITLIVLLAIVTIIAIALVAILPTKTPAVELVSTIPGKCPSAENDRLDEKINCIPDQFPTQALCAMQGCCWNPRNESPTPWCSFANNHGYEFEKISNPNINFEPNLKKNSPPTLFGDNITNLLLTTQSQTANRFRFKITDPNNQRYEVPHQFVNKDFSGPPASNPLYDVKITENPFSIKVIRKSNNKILFDTSIGPLVYSNQYLQISTKLPSKYIYGLGEHVHKRFRHDLYWKTWPIFTRDQLPGDNNNNLYGHQTFFMSIEDTSGKSFGVFLMNSNAMEVFIQPTPIVTYRVIGGILDFYIFLGDTPGQVVQQYQELTGRPAMPSYWSLGFQLSRWNYGSLDAVKEVVKRNRDARIPFDAQVTDIDYMEDKKDFTYNNKTFYGLPEFVKDLHDHGQKYIIILDPAISITSLANGNHYKTYERGNEQKVWVYQSDGTTPLIGEVWPGLTVYPDFTNPKCLDWWTNECSIFHEEIKYDGLWIDMNEVSSFVHGSTKGCSDNKLNYPPFIPDILDKLMYAKTICMDAIQHWGKQYDVHSLYGYSMAIATEKAIEKVFPNKRSFILTRSTFAGTGKHATHWLGDNTPSWEHMEWSITPMLEFGLFGMPFIGADICGFVVDTTEELCRRWMQIGAFYPYFRDHNAGGYMPQDPAYFGQDSLLVNTSRHYLDIWYTLLPYLYNLLYKAYVYGETVARPFLYEFYEDTNSWIEDLQFLWGSALLITPVLRQGADRMSAYIPDATWYDYETGGKRTWRKQRVEMYLPGDKIGLHVRGGYIIPTQQPAVNTTASRKNPLGLIIALDNNAAKGDFFWDDGESKDSIEKGKYILYTFSVLNNELDIICTHSSYQEGTTLAFETIKILGLANTVTQVQVAENNQQTIIHNSFTYHASNQSLIIDNLKLNLGKNFTVQWNQVSLDSEKIDCFPDNNPENKQNCEERGCLWEPNSAAEGPRCYFPKQYNPYLVKSTQYSSMGITVDLELNTATARIKMPSNPISVLRLEVKYHKNDMLQFKIYDPQNKRYEVPIPMDIPTTPTSTYENRLYDVNIKGNPFGIQIRRRSTGRIFWDSCLPWGLLLMNQFIQISTRLPSEYVYGFGGVGHRQFKQDLNWHKWGMFNRDQPSGYKISSYGFQPYIYMALGDGGNAHGVFLLNSNAMDVTFQPNPALTYRTIGGILDFYMFLGPNPEVATKQYHEVIGRPVKPPYWALGFHLCRYGYENTSEIRQLYEDMVSAQIPYDVQYTDIDYMERQLDFTIGKGFQDLPEFVDKIRDEGMKYIIILDPAISGNETQDYLAFQRGIEKDVFVKWPNTQDICWAKVWPDLPNITIDDSLTEDEAVNASRAHVAFPDFLKTSTAEWWATEIEDFYNTYMKFDGLWIDMNEPSSFVHGSVDNKCRNEILNYPPYMPALTKRNEGLHFRTMCMETQQTLSNGSSVLHYDVHNLYGWSQAKPTYDALQKTTGKRGIVISRSTYPSAGRWAGHWLGDNYANWDKIGKSIIGMMEFSLFGISFTGADICGFFNNSDYELCARWMQVGAFYPYSRNHNITDTRRQDPVSWNETFASMSTDILNIRYNLLPYFYTQMHDIHANGGTVIRPLLHEFFSETGTWDIYKQFLWGPAFMVTPVVEPYSESVTGYVPDGRWLDYHTGQDIGLRKRLHTLDAPLYKINLHVCGGHILPCQEPAQNTYFSRQNYMKLIVAADDNQTAQGYLFWDDGESIDTYEKGQYLLVQFNLNKATLTSTILKNGYINTREMRLGFINVWGKGNTVVQEVNITYKGNKESVKFSQEANKQILNIDLTANNIVLDEPIEISWT</sequence>
<keyword id="KW-1003">Cell membrane</keyword>
<keyword id="KW-1015">Disulfide bond</keyword>
<keyword id="KW-0325">Glycoprotein</keyword>
<keyword id="KW-0326">Glycosidase</keyword>
<keyword id="KW-0378">Hydrolase</keyword>
<keyword id="KW-0472">Membrane</keyword>
<keyword id="KW-0511">Multifunctional enzyme</keyword>
<keyword id="KW-0597">Phosphoprotein</keyword>
<keyword id="KW-0677">Repeat</keyword>
<keyword id="KW-0735">Signal-anchor</keyword>
<keyword id="KW-0765">Sulfation</keyword>
<keyword id="KW-0812">Transmembrane</keyword>
<keyword id="KW-1133">Transmembrane helix</keyword>
<gene>
    <name type="primary">SI</name>
</gene>
<protein>
    <recommendedName>
        <fullName>Sucrase-isomaltase, intestinal</fullName>
    </recommendedName>
    <component>
        <recommendedName>
            <fullName>Sucrase</fullName>
            <ecNumber>3.2.1.48</ecNumber>
        </recommendedName>
    </component>
    <component>
        <recommendedName>
            <fullName>Isomaltase</fullName>
            <ecNumber>3.2.1.10</ecNumber>
        </recommendedName>
    </component>
</protein>